<reference key="1">
    <citation type="journal article" date="2002" name="Nature">
        <title>Sequence and analysis of rice chromosome 4.</title>
        <authorList>
            <person name="Feng Q."/>
            <person name="Zhang Y."/>
            <person name="Hao P."/>
            <person name="Wang S."/>
            <person name="Fu G."/>
            <person name="Huang Y."/>
            <person name="Li Y."/>
            <person name="Zhu J."/>
            <person name="Liu Y."/>
            <person name="Hu X."/>
            <person name="Jia P."/>
            <person name="Zhang Y."/>
            <person name="Zhao Q."/>
            <person name="Ying K."/>
            <person name="Yu S."/>
            <person name="Tang Y."/>
            <person name="Weng Q."/>
            <person name="Zhang L."/>
            <person name="Lu Y."/>
            <person name="Mu J."/>
            <person name="Lu Y."/>
            <person name="Zhang L.S."/>
            <person name="Yu Z."/>
            <person name="Fan D."/>
            <person name="Liu X."/>
            <person name="Lu T."/>
            <person name="Li C."/>
            <person name="Wu Y."/>
            <person name="Sun T."/>
            <person name="Lei H."/>
            <person name="Li T."/>
            <person name="Hu H."/>
            <person name="Guan J."/>
            <person name="Wu M."/>
            <person name="Zhang R."/>
            <person name="Zhou B."/>
            <person name="Chen Z."/>
            <person name="Chen L."/>
            <person name="Jin Z."/>
            <person name="Wang R."/>
            <person name="Yin H."/>
            <person name="Cai Z."/>
            <person name="Ren S."/>
            <person name="Lv G."/>
            <person name="Gu W."/>
            <person name="Zhu G."/>
            <person name="Tu Y."/>
            <person name="Jia J."/>
            <person name="Zhang Y."/>
            <person name="Chen J."/>
            <person name="Kang H."/>
            <person name="Chen X."/>
            <person name="Shao C."/>
            <person name="Sun Y."/>
            <person name="Hu Q."/>
            <person name="Zhang X."/>
            <person name="Zhang W."/>
            <person name="Wang L."/>
            <person name="Ding C."/>
            <person name="Sheng H."/>
            <person name="Gu J."/>
            <person name="Chen S."/>
            <person name="Ni L."/>
            <person name="Zhu F."/>
            <person name="Chen W."/>
            <person name="Lan L."/>
            <person name="Lai Y."/>
            <person name="Cheng Z."/>
            <person name="Gu M."/>
            <person name="Jiang J."/>
            <person name="Li J."/>
            <person name="Hong G."/>
            <person name="Xue Y."/>
            <person name="Han B."/>
        </authorList>
    </citation>
    <scope>NUCLEOTIDE SEQUENCE [LARGE SCALE GENOMIC DNA]</scope>
    <source>
        <strain>cv. Nipponbare</strain>
    </source>
</reference>
<reference key="2">
    <citation type="journal article" date="2005" name="Nature">
        <title>The map-based sequence of the rice genome.</title>
        <authorList>
            <consortium name="International rice genome sequencing project (IRGSP)"/>
        </authorList>
    </citation>
    <scope>NUCLEOTIDE SEQUENCE [LARGE SCALE GENOMIC DNA]</scope>
    <source>
        <strain>cv. Nipponbare</strain>
    </source>
</reference>
<reference key="3">
    <citation type="journal article" date="2008" name="Nucleic Acids Res.">
        <title>The rice annotation project database (RAP-DB): 2008 update.</title>
        <authorList>
            <consortium name="The rice annotation project (RAP)"/>
        </authorList>
    </citation>
    <scope>GENOME REANNOTATION</scope>
    <source>
        <strain>cv. Nipponbare</strain>
    </source>
</reference>
<reference key="4">
    <citation type="journal article" date="2013" name="Rice">
        <title>Improvement of the Oryza sativa Nipponbare reference genome using next generation sequence and optical map data.</title>
        <authorList>
            <person name="Kawahara Y."/>
            <person name="de la Bastide M."/>
            <person name="Hamilton J.P."/>
            <person name="Kanamori H."/>
            <person name="McCombie W.R."/>
            <person name="Ouyang S."/>
            <person name="Schwartz D.C."/>
            <person name="Tanaka T."/>
            <person name="Wu J."/>
            <person name="Zhou S."/>
            <person name="Childs K.L."/>
            <person name="Davidson R.M."/>
            <person name="Lin H."/>
            <person name="Quesada-Ocampo L."/>
            <person name="Vaillancourt B."/>
            <person name="Sakai H."/>
            <person name="Lee S.S."/>
            <person name="Kim J."/>
            <person name="Numa H."/>
            <person name="Itoh T."/>
            <person name="Buell C.R."/>
            <person name="Matsumoto T."/>
        </authorList>
    </citation>
    <scope>GENOME REANNOTATION</scope>
    <source>
        <strain>cv. Nipponbare</strain>
    </source>
</reference>
<reference key="5">
    <citation type="journal article" date="2005" name="PLoS Biol.">
        <title>The genomes of Oryza sativa: a history of duplications.</title>
        <authorList>
            <person name="Yu J."/>
            <person name="Wang J."/>
            <person name="Lin W."/>
            <person name="Li S."/>
            <person name="Li H."/>
            <person name="Zhou J."/>
            <person name="Ni P."/>
            <person name="Dong W."/>
            <person name="Hu S."/>
            <person name="Zeng C."/>
            <person name="Zhang J."/>
            <person name="Zhang Y."/>
            <person name="Li R."/>
            <person name="Xu Z."/>
            <person name="Li S."/>
            <person name="Li X."/>
            <person name="Zheng H."/>
            <person name="Cong L."/>
            <person name="Lin L."/>
            <person name="Yin J."/>
            <person name="Geng J."/>
            <person name="Li G."/>
            <person name="Shi J."/>
            <person name="Liu J."/>
            <person name="Lv H."/>
            <person name="Li J."/>
            <person name="Wang J."/>
            <person name="Deng Y."/>
            <person name="Ran L."/>
            <person name="Shi X."/>
            <person name="Wang X."/>
            <person name="Wu Q."/>
            <person name="Li C."/>
            <person name="Ren X."/>
            <person name="Wang J."/>
            <person name="Wang X."/>
            <person name="Li D."/>
            <person name="Liu D."/>
            <person name="Zhang X."/>
            <person name="Ji Z."/>
            <person name="Zhao W."/>
            <person name="Sun Y."/>
            <person name="Zhang Z."/>
            <person name="Bao J."/>
            <person name="Han Y."/>
            <person name="Dong L."/>
            <person name="Ji J."/>
            <person name="Chen P."/>
            <person name="Wu S."/>
            <person name="Liu J."/>
            <person name="Xiao Y."/>
            <person name="Bu D."/>
            <person name="Tan J."/>
            <person name="Yang L."/>
            <person name="Ye C."/>
            <person name="Zhang J."/>
            <person name="Xu J."/>
            <person name="Zhou Y."/>
            <person name="Yu Y."/>
            <person name="Zhang B."/>
            <person name="Zhuang S."/>
            <person name="Wei H."/>
            <person name="Liu B."/>
            <person name="Lei M."/>
            <person name="Yu H."/>
            <person name="Li Y."/>
            <person name="Xu H."/>
            <person name="Wei S."/>
            <person name="He X."/>
            <person name="Fang L."/>
            <person name="Zhang Z."/>
            <person name="Zhang Y."/>
            <person name="Huang X."/>
            <person name="Su Z."/>
            <person name="Tong W."/>
            <person name="Li J."/>
            <person name="Tong Z."/>
            <person name="Li S."/>
            <person name="Ye J."/>
            <person name="Wang L."/>
            <person name="Fang L."/>
            <person name="Lei T."/>
            <person name="Chen C.-S."/>
            <person name="Chen H.-C."/>
            <person name="Xu Z."/>
            <person name="Li H."/>
            <person name="Huang H."/>
            <person name="Zhang F."/>
            <person name="Xu H."/>
            <person name="Li N."/>
            <person name="Zhao C."/>
            <person name="Li S."/>
            <person name="Dong L."/>
            <person name="Huang Y."/>
            <person name="Li L."/>
            <person name="Xi Y."/>
            <person name="Qi Q."/>
            <person name="Li W."/>
            <person name="Zhang B."/>
            <person name="Hu W."/>
            <person name="Zhang Y."/>
            <person name="Tian X."/>
            <person name="Jiao Y."/>
            <person name="Liang X."/>
            <person name="Jin J."/>
            <person name="Gao L."/>
            <person name="Zheng W."/>
            <person name="Hao B."/>
            <person name="Liu S.-M."/>
            <person name="Wang W."/>
            <person name="Yuan L."/>
            <person name="Cao M."/>
            <person name="McDermott J."/>
            <person name="Samudrala R."/>
            <person name="Wang J."/>
            <person name="Wong G.K.-S."/>
            <person name="Yang H."/>
        </authorList>
    </citation>
    <scope>NUCLEOTIDE SEQUENCE [LARGE SCALE GENOMIC DNA]</scope>
    <source>
        <strain>cv. Nipponbare</strain>
    </source>
</reference>
<organism>
    <name type="scientific">Oryza sativa subsp. japonica</name>
    <name type="common">Rice</name>
    <dbReference type="NCBI Taxonomy" id="39947"/>
    <lineage>
        <taxon>Eukaryota</taxon>
        <taxon>Viridiplantae</taxon>
        <taxon>Streptophyta</taxon>
        <taxon>Embryophyta</taxon>
        <taxon>Tracheophyta</taxon>
        <taxon>Spermatophyta</taxon>
        <taxon>Magnoliopsida</taxon>
        <taxon>Liliopsida</taxon>
        <taxon>Poales</taxon>
        <taxon>Poaceae</taxon>
        <taxon>BOP clade</taxon>
        <taxon>Oryzoideae</taxon>
        <taxon>Oryzeae</taxon>
        <taxon>Oryzinae</taxon>
        <taxon>Oryza</taxon>
        <taxon>Oryza sativa</taxon>
    </lineage>
</organism>
<proteinExistence type="inferred from homology"/>
<name>GT43_ORYSJ</name>
<keyword id="KW-0961">Cell wall biogenesis/degradation</keyword>
<keyword id="KW-0325">Glycoprotein</keyword>
<keyword id="KW-0328">Glycosyltransferase</keyword>
<keyword id="KW-0333">Golgi apparatus</keyword>
<keyword id="KW-0472">Membrane</keyword>
<keyword id="KW-1185">Reference proteome</keyword>
<keyword id="KW-0735">Signal-anchor</keyword>
<keyword id="KW-0808">Transferase</keyword>
<keyword id="KW-0812">Transmembrane</keyword>
<keyword id="KW-1133">Transmembrane helix</keyword>
<accession>B9FCV3</accession>
<accession>Q0J9I4</accession>
<accession>Q7XMQ1</accession>
<evidence type="ECO:0000250" key="1"/>
<evidence type="ECO:0000255" key="2"/>
<evidence type="ECO:0000256" key="3">
    <source>
        <dbReference type="SAM" id="MobiDB-lite"/>
    </source>
</evidence>
<evidence type="ECO:0000305" key="4"/>
<protein>
    <recommendedName>
        <fullName>Probable glucuronosyltransferase Os04g0650300</fullName>
        <ecNumber>2.4.-.-</ecNumber>
    </recommendedName>
    <alternativeName>
        <fullName>OsGT43B</fullName>
    </alternativeName>
</protein>
<dbReference type="EC" id="2.4.-.-"/>
<dbReference type="EMBL" id="AL606692">
    <property type="protein sequence ID" value="CAE04500.1"/>
    <property type="status" value="ALT_SEQ"/>
    <property type="molecule type" value="Genomic_DNA"/>
</dbReference>
<dbReference type="EMBL" id="AP008210">
    <property type="protein sequence ID" value="BAF16003.1"/>
    <property type="status" value="ALT_SEQ"/>
    <property type="molecule type" value="Genomic_DNA"/>
</dbReference>
<dbReference type="EMBL" id="AP014960">
    <property type="status" value="NOT_ANNOTATED_CDS"/>
    <property type="molecule type" value="Genomic_DNA"/>
</dbReference>
<dbReference type="EMBL" id="CM000141">
    <property type="protein sequence ID" value="EEE61808.1"/>
    <property type="molecule type" value="Genomic_DNA"/>
</dbReference>
<dbReference type="SMR" id="B9FCV3"/>
<dbReference type="STRING" id="39947.B9FCV3"/>
<dbReference type="CAZy" id="GT43">
    <property type="family name" value="Glycosyltransferase Family 43"/>
</dbReference>
<dbReference type="PaxDb" id="39947-B9FCV3"/>
<dbReference type="KEGG" id="dosa:Os04g0650300"/>
<dbReference type="KEGG" id="osa:4337225"/>
<dbReference type="InParanoid" id="B9FCV3"/>
<dbReference type="OrthoDB" id="675023at2759"/>
<dbReference type="Proteomes" id="UP000000763">
    <property type="component" value="Chromosome 4"/>
</dbReference>
<dbReference type="Proteomes" id="UP000007752">
    <property type="component" value="Chromosome 4"/>
</dbReference>
<dbReference type="Proteomes" id="UP000059680">
    <property type="component" value="Chromosome 4"/>
</dbReference>
<dbReference type="GO" id="GO:0000139">
    <property type="term" value="C:Golgi membrane"/>
    <property type="evidence" value="ECO:0000318"/>
    <property type="project" value="GO_Central"/>
</dbReference>
<dbReference type="GO" id="GO:0015018">
    <property type="term" value="F:galactosylgalactosylxylosylprotein 3-beta-glucuronosyltransferase activity"/>
    <property type="evidence" value="ECO:0007669"/>
    <property type="project" value="InterPro"/>
</dbReference>
<dbReference type="GO" id="GO:0042285">
    <property type="term" value="F:xylosyltransferase activity"/>
    <property type="evidence" value="ECO:0000318"/>
    <property type="project" value="GO_Central"/>
</dbReference>
<dbReference type="GO" id="GO:0071555">
    <property type="term" value="P:cell wall organization"/>
    <property type="evidence" value="ECO:0007669"/>
    <property type="project" value="UniProtKB-KW"/>
</dbReference>
<dbReference type="GO" id="GO:0010417">
    <property type="term" value="P:glucuronoxylan biosynthetic process"/>
    <property type="evidence" value="ECO:0000318"/>
    <property type="project" value="GO_Central"/>
</dbReference>
<dbReference type="GO" id="GO:0009834">
    <property type="term" value="P:plant-type secondary cell wall biogenesis"/>
    <property type="evidence" value="ECO:0000318"/>
    <property type="project" value="GO_Central"/>
</dbReference>
<dbReference type="FunFam" id="3.90.550.10:FF:000152">
    <property type="entry name" value="Glycosyltransferases"/>
    <property type="match status" value="1"/>
</dbReference>
<dbReference type="Gene3D" id="3.90.550.10">
    <property type="entry name" value="Spore Coat Polysaccharide Biosynthesis Protein SpsA, Chain A"/>
    <property type="match status" value="1"/>
</dbReference>
<dbReference type="InterPro" id="IPR005027">
    <property type="entry name" value="Glyco_trans_43"/>
</dbReference>
<dbReference type="InterPro" id="IPR029044">
    <property type="entry name" value="Nucleotide-diphossugar_trans"/>
</dbReference>
<dbReference type="PANTHER" id="PTHR10896">
    <property type="entry name" value="GALACTOSYLGALACTOSYLXYLOSYLPROTEIN 3-BETA-GLUCURONOSYLTRANSFERASE BETA-1,3-GLUCURONYLTRANSFERASE"/>
    <property type="match status" value="1"/>
</dbReference>
<dbReference type="PANTHER" id="PTHR10896:SF24">
    <property type="entry name" value="GLUCURONOSYLTRANSFERASE OS04G0650300-RELATED"/>
    <property type="match status" value="1"/>
</dbReference>
<dbReference type="Pfam" id="PF03360">
    <property type="entry name" value="Glyco_transf_43"/>
    <property type="match status" value="1"/>
</dbReference>
<dbReference type="SUPFAM" id="SSF53448">
    <property type="entry name" value="Nucleotide-diphospho-sugar transferases"/>
    <property type="match status" value="1"/>
</dbReference>
<comment type="function">
    <text evidence="1">Involved in the synthesis of glucuronoxylan hemicellulose in secondary cell walls.</text>
</comment>
<comment type="subcellular location">
    <subcellularLocation>
        <location evidence="1">Golgi apparatus membrane</location>
        <topology evidence="1">Single-pass type II membrane protein</topology>
    </subcellularLocation>
</comment>
<comment type="similarity">
    <text evidence="4">Belongs to the glycosyltransferase 43 family.</text>
</comment>
<comment type="sequence caution" evidence="4">
    <conflict type="erroneous gene model prediction">
        <sequence resource="EMBL-CDS" id="BAF16003"/>
    </conflict>
</comment>
<comment type="sequence caution" evidence="4">
    <conflict type="erroneous gene model prediction">
        <sequence resource="EMBL-CDS" id="CAE04500"/>
    </conflict>
</comment>
<gene>
    <name type="ordered locus">Os04g0650300</name>
    <name type="ordered locus">LOC_Os04g55670</name>
    <name type="ORF">OsJ_16428</name>
</gene>
<feature type="chain" id="PRO_0000407557" description="Probable glucuronosyltransferase Os04g0650300">
    <location>
        <begin position="1"/>
        <end position="446"/>
    </location>
</feature>
<feature type="topological domain" description="Cytoplasmic" evidence="2">
    <location>
        <begin position="1"/>
        <end position="30"/>
    </location>
</feature>
<feature type="transmembrane region" description="Helical; Signal-anchor for type II membrane protein" evidence="2">
    <location>
        <begin position="31"/>
        <end position="51"/>
    </location>
</feature>
<feature type="topological domain" description="Lumenal" evidence="2">
    <location>
        <begin position="52"/>
        <end position="446"/>
    </location>
</feature>
<feature type="region of interest" description="Disordered" evidence="3">
    <location>
        <begin position="425"/>
        <end position="446"/>
    </location>
</feature>
<feature type="glycosylation site" description="N-linked (GlcNAc...) asparagine" evidence="2">
    <location>
        <position position="87"/>
    </location>
</feature>
<sequence>MKLPLLRPLWPMLSPAAGSPDSPPEPSKPSLPAAWLLLHALFCATSMAVGFRFSRLIVYLLFLPTPINPTAHLVSLVSPPVMLAAANATTTITTTTTTTTTTVTTTTVAAEVGAHPQHHHHGPVFVGRHPIRVRPWPHPDPNELLKAHHILAAVQNAQRSSRRRGAGPPRPVIAVTPTTTSALQVPSLTSMAHTLRLVDGPLTWIVVEPEHHTDAVAAVLSRSNLNFLHITGPDSSTSRLRMHALREIRKRKMDGVVVFADENSILRTELFDEAQKVKSVGAVPVGVLGEDEGTSETFLQAPSCDAEGKLVGYHVSEETMLPANRGDMLLSSRLEWAGFVVNAQALWEGGGAASRPEWVSDIDAIDDGAAASPLSLVTDAARVEPLASCGQAALAWSHRSDALHEVKFPHEWKIDPPLVTIASRQQDAKPETPLKRTTLLNTEGQH</sequence>